<dbReference type="EC" id="3.5.1.18" evidence="1"/>
<dbReference type="EMBL" id="CP000089">
    <property type="protein sequence ID" value="AAZ46471.1"/>
    <property type="molecule type" value="Genomic_DNA"/>
</dbReference>
<dbReference type="SMR" id="Q47FB0"/>
<dbReference type="STRING" id="159087.Daro_1724"/>
<dbReference type="KEGG" id="dar:Daro_1724"/>
<dbReference type="eggNOG" id="COG0624">
    <property type="taxonomic scope" value="Bacteria"/>
</dbReference>
<dbReference type="HOGENOM" id="CLU_021802_4_0_4"/>
<dbReference type="OrthoDB" id="9809784at2"/>
<dbReference type="UniPathway" id="UPA00034">
    <property type="reaction ID" value="UER00021"/>
</dbReference>
<dbReference type="GO" id="GO:0008777">
    <property type="term" value="F:acetylornithine deacetylase activity"/>
    <property type="evidence" value="ECO:0007669"/>
    <property type="project" value="TreeGrafter"/>
</dbReference>
<dbReference type="GO" id="GO:0050897">
    <property type="term" value="F:cobalt ion binding"/>
    <property type="evidence" value="ECO:0007669"/>
    <property type="project" value="UniProtKB-UniRule"/>
</dbReference>
<dbReference type="GO" id="GO:0009014">
    <property type="term" value="F:succinyl-diaminopimelate desuccinylase activity"/>
    <property type="evidence" value="ECO:0007669"/>
    <property type="project" value="UniProtKB-UniRule"/>
</dbReference>
<dbReference type="GO" id="GO:0008270">
    <property type="term" value="F:zinc ion binding"/>
    <property type="evidence" value="ECO:0007669"/>
    <property type="project" value="UniProtKB-UniRule"/>
</dbReference>
<dbReference type="GO" id="GO:0019877">
    <property type="term" value="P:diaminopimelate biosynthetic process"/>
    <property type="evidence" value="ECO:0007669"/>
    <property type="project" value="UniProtKB-UniRule"/>
</dbReference>
<dbReference type="GO" id="GO:0006526">
    <property type="term" value="P:L-arginine biosynthetic process"/>
    <property type="evidence" value="ECO:0007669"/>
    <property type="project" value="TreeGrafter"/>
</dbReference>
<dbReference type="GO" id="GO:0009089">
    <property type="term" value="P:lysine biosynthetic process via diaminopimelate"/>
    <property type="evidence" value="ECO:0007669"/>
    <property type="project" value="UniProtKB-UniRule"/>
</dbReference>
<dbReference type="CDD" id="cd03891">
    <property type="entry name" value="M20_DapE_proteobac"/>
    <property type="match status" value="1"/>
</dbReference>
<dbReference type="FunFam" id="3.30.70.360:FF:000011">
    <property type="entry name" value="Succinyl-diaminopimelate desuccinylase"/>
    <property type="match status" value="1"/>
</dbReference>
<dbReference type="FunFam" id="3.40.630.10:FF:000005">
    <property type="entry name" value="Succinyl-diaminopimelate desuccinylase"/>
    <property type="match status" value="1"/>
</dbReference>
<dbReference type="Gene3D" id="3.40.630.10">
    <property type="entry name" value="Zn peptidases"/>
    <property type="match status" value="2"/>
</dbReference>
<dbReference type="HAMAP" id="MF_01690">
    <property type="entry name" value="DapE"/>
    <property type="match status" value="1"/>
</dbReference>
<dbReference type="InterPro" id="IPR001261">
    <property type="entry name" value="ArgE/DapE_CS"/>
</dbReference>
<dbReference type="InterPro" id="IPR036264">
    <property type="entry name" value="Bact_exopeptidase_dim_dom"/>
</dbReference>
<dbReference type="InterPro" id="IPR005941">
    <property type="entry name" value="DapE_proteobac"/>
</dbReference>
<dbReference type="InterPro" id="IPR002933">
    <property type="entry name" value="Peptidase_M20"/>
</dbReference>
<dbReference type="InterPro" id="IPR011650">
    <property type="entry name" value="Peptidase_M20_dimer"/>
</dbReference>
<dbReference type="InterPro" id="IPR050072">
    <property type="entry name" value="Peptidase_M20A"/>
</dbReference>
<dbReference type="NCBIfam" id="TIGR01246">
    <property type="entry name" value="dapE_proteo"/>
    <property type="match status" value="1"/>
</dbReference>
<dbReference type="NCBIfam" id="NF009557">
    <property type="entry name" value="PRK13009.1"/>
    <property type="match status" value="1"/>
</dbReference>
<dbReference type="PANTHER" id="PTHR43808">
    <property type="entry name" value="ACETYLORNITHINE DEACETYLASE"/>
    <property type="match status" value="1"/>
</dbReference>
<dbReference type="PANTHER" id="PTHR43808:SF31">
    <property type="entry name" value="N-ACETYL-L-CITRULLINE DEACETYLASE"/>
    <property type="match status" value="1"/>
</dbReference>
<dbReference type="Pfam" id="PF07687">
    <property type="entry name" value="M20_dimer"/>
    <property type="match status" value="1"/>
</dbReference>
<dbReference type="Pfam" id="PF01546">
    <property type="entry name" value="Peptidase_M20"/>
    <property type="match status" value="1"/>
</dbReference>
<dbReference type="SUPFAM" id="SSF55031">
    <property type="entry name" value="Bacterial exopeptidase dimerisation domain"/>
    <property type="match status" value="1"/>
</dbReference>
<dbReference type="SUPFAM" id="SSF53187">
    <property type="entry name" value="Zn-dependent exopeptidases"/>
    <property type="match status" value="1"/>
</dbReference>
<dbReference type="PROSITE" id="PS00759">
    <property type="entry name" value="ARGE_DAPE_CPG2_2"/>
    <property type="match status" value="1"/>
</dbReference>
<name>DAPE_DECAR</name>
<accession>Q47FB0</accession>
<organism>
    <name type="scientific">Dechloromonas aromatica (strain RCB)</name>
    <dbReference type="NCBI Taxonomy" id="159087"/>
    <lineage>
        <taxon>Bacteria</taxon>
        <taxon>Pseudomonadati</taxon>
        <taxon>Pseudomonadota</taxon>
        <taxon>Betaproteobacteria</taxon>
        <taxon>Rhodocyclales</taxon>
        <taxon>Azonexaceae</taxon>
        <taxon>Dechloromonas</taxon>
    </lineage>
</organism>
<feature type="chain" id="PRO_0000375540" description="Succinyl-diaminopimelate desuccinylase">
    <location>
        <begin position="1"/>
        <end position="377"/>
    </location>
</feature>
<feature type="active site" evidence="1">
    <location>
        <position position="69"/>
    </location>
</feature>
<feature type="active site" description="Proton acceptor" evidence="1">
    <location>
        <position position="134"/>
    </location>
</feature>
<feature type="binding site" evidence="1">
    <location>
        <position position="67"/>
    </location>
    <ligand>
        <name>Zn(2+)</name>
        <dbReference type="ChEBI" id="CHEBI:29105"/>
        <label>1</label>
    </ligand>
</feature>
<feature type="binding site" evidence="1">
    <location>
        <position position="100"/>
    </location>
    <ligand>
        <name>Zn(2+)</name>
        <dbReference type="ChEBI" id="CHEBI:29105"/>
        <label>1</label>
    </ligand>
</feature>
<feature type="binding site" evidence="1">
    <location>
        <position position="100"/>
    </location>
    <ligand>
        <name>Zn(2+)</name>
        <dbReference type="ChEBI" id="CHEBI:29105"/>
        <label>2</label>
    </ligand>
</feature>
<feature type="binding site" evidence="1">
    <location>
        <position position="135"/>
    </location>
    <ligand>
        <name>Zn(2+)</name>
        <dbReference type="ChEBI" id="CHEBI:29105"/>
        <label>2</label>
    </ligand>
</feature>
<feature type="binding site" evidence="1">
    <location>
        <position position="163"/>
    </location>
    <ligand>
        <name>Zn(2+)</name>
        <dbReference type="ChEBI" id="CHEBI:29105"/>
        <label>1</label>
    </ligand>
</feature>
<feature type="binding site" evidence="1">
    <location>
        <position position="349"/>
    </location>
    <ligand>
        <name>Zn(2+)</name>
        <dbReference type="ChEBI" id="CHEBI:29105"/>
        <label>2</label>
    </ligand>
</feature>
<reference key="1">
    <citation type="journal article" date="2009" name="BMC Genomics">
        <title>Metabolic analysis of the soil microbe Dechloromonas aromatica str. RCB: indications of a surprisingly complex life-style and cryptic anaerobic pathways for aromatic degradation.</title>
        <authorList>
            <person name="Salinero K.K."/>
            <person name="Keller K."/>
            <person name="Feil W.S."/>
            <person name="Feil H."/>
            <person name="Trong S."/>
            <person name="Di Bartolo G."/>
            <person name="Lapidus A."/>
        </authorList>
    </citation>
    <scope>NUCLEOTIDE SEQUENCE [LARGE SCALE GENOMIC DNA]</scope>
    <source>
        <strain>RCB</strain>
    </source>
</reference>
<gene>
    <name evidence="1" type="primary">dapE</name>
    <name type="ordered locus">Daro_1724</name>
</gene>
<proteinExistence type="inferred from homology"/>
<comment type="function">
    <text evidence="1">Catalyzes the hydrolysis of N-succinyl-L,L-diaminopimelic acid (SDAP), forming succinate and LL-2,6-diaminopimelate (DAP), an intermediate involved in the bacterial biosynthesis of lysine and meso-diaminopimelic acid, an essential component of bacterial cell walls.</text>
</comment>
<comment type="catalytic activity">
    <reaction evidence="1">
        <text>N-succinyl-(2S,6S)-2,6-diaminopimelate + H2O = (2S,6S)-2,6-diaminopimelate + succinate</text>
        <dbReference type="Rhea" id="RHEA:22608"/>
        <dbReference type="ChEBI" id="CHEBI:15377"/>
        <dbReference type="ChEBI" id="CHEBI:30031"/>
        <dbReference type="ChEBI" id="CHEBI:57609"/>
        <dbReference type="ChEBI" id="CHEBI:58087"/>
        <dbReference type="EC" id="3.5.1.18"/>
    </reaction>
</comment>
<comment type="cofactor">
    <cofactor evidence="1">
        <name>Zn(2+)</name>
        <dbReference type="ChEBI" id="CHEBI:29105"/>
    </cofactor>
    <cofactor evidence="1">
        <name>Co(2+)</name>
        <dbReference type="ChEBI" id="CHEBI:48828"/>
    </cofactor>
    <text evidence="1">Binds 2 Zn(2+) or Co(2+) ions per subunit.</text>
</comment>
<comment type="pathway">
    <text evidence="1">Amino-acid biosynthesis; L-lysine biosynthesis via DAP pathway; LL-2,6-diaminopimelate from (S)-tetrahydrodipicolinate (succinylase route): step 3/3.</text>
</comment>
<comment type="subunit">
    <text evidence="1">Homodimer.</text>
</comment>
<comment type="similarity">
    <text evidence="1">Belongs to the peptidase M20A family. DapE subfamily.</text>
</comment>
<evidence type="ECO:0000255" key="1">
    <source>
        <dbReference type="HAMAP-Rule" id="MF_01690"/>
    </source>
</evidence>
<sequence>MSDTTLELAKRIIACASVTPEDAGCMDILIERLKPLGFSIEFINRNGVTNLWARRGTTAPLFVFAGHTDVVPTGPLDKWTSPPFAPEIRDGVLYGRGTADMKSSVAASVTAVEAFVAANPQHPGSLAFLLTSDEEGDANDGTIAVVEALKARGETLDFCIIGEPTSVDTLGDMVKNGRRGSLSGVLTVKGIQCHIAYPEKGRNPIHEAAPALAELAATEWDQGNEYYQPTTWQISNIHGGTGATNVVPGSVDIKFNFRFSTASTPEGLQQRLSAILEKHKLDYEIKWTLGARPFLTGRGPLADAATTAIREICGIETELSTTGGTSDGRFIAEICRQMLEIGPVNATSHKIDECIAVDALPKLSAIYRRILEQLMTA</sequence>
<protein>
    <recommendedName>
        <fullName evidence="1">Succinyl-diaminopimelate desuccinylase</fullName>
        <shortName evidence="1">SDAP desuccinylase</shortName>
        <ecNumber evidence="1">3.5.1.18</ecNumber>
    </recommendedName>
    <alternativeName>
        <fullName evidence="1">N-succinyl-LL-2,6-diaminoheptanedioate amidohydrolase</fullName>
    </alternativeName>
</protein>
<keyword id="KW-0028">Amino-acid biosynthesis</keyword>
<keyword id="KW-0170">Cobalt</keyword>
<keyword id="KW-0220">Diaminopimelate biosynthesis</keyword>
<keyword id="KW-0378">Hydrolase</keyword>
<keyword id="KW-0457">Lysine biosynthesis</keyword>
<keyword id="KW-0479">Metal-binding</keyword>
<keyword id="KW-0862">Zinc</keyword>